<evidence type="ECO:0000256" key="1">
    <source>
        <dbReference type="SAM" id="MobiDB-lite"/>
    </source>
</evidence>
<evidence type="ECO:0000305" key="2"/>
<sequence length="86" mass="8434">MTILASISSIGNIKSSSKSNIASSSSSSSSQSLNSIQCCSCSLALGNTVGNLVGGVLFGTGVIVGSVLNTVGNITTPILHPDCGCN</sequence>
<keyword id="KW-1185">Reference proteome</keyword>
<feature type="chain" id="PRO_0000330428" description="HssA/B-like protein 60">
    <location>
        <begin position="1"/>
        <end position="86"/>
    </location>
</feature>
<feature type="region of interest" description="Disordered" evidence="1">
    <location>
        <begin position="11"/>
        <end position="33"/>
    </location>
</feature>
<protein>
    <recommendedName>
        <fullName>HssA/B-like protein 60</fullName>
    </recommendedName>
</protein>
<proteinExistence type="inferred from homology"/>
<dbReference type="EMBL" id="AAFI02000056">
    <property type="protein sequence ID" value="EAL65623.1"/>
    <property type="molecule type" value="Genomic_DNA"/>
</dbReference>
<dbReference type="RefSeq" id="XP_638979.1">
    <property type="nucleotide sequence ID" value="XM_633887.1"/>
</dbReference>
<dbReference type="PaxDb" id="44689-DDB0252778"/>
<dbReference type="EnsemblProtists" id="EAL65623">
    <property type="protein sequence ID" value="EAL65623"/>
    <property type="gene ID" value="DDB_G0283713"/>
</dbReference>
<dbReference type="GeneID" id="8624225"/>
<dbReference type="KEGG" id="ddi:DDB_G0283713"/>
<dbReference type="dictyBase" id="DDB_G0283713"/>
<dbReference type="HOGENOM" id="CLU_190274_0_0_1"/>
<dbReference type="InParanoid" id="Q54QP4"/>
<dbReference type="PRO" id="PR:Q54QP4"/>
<dbReference type="Proteomes" id="UP000002195">
    <property type="component" value="Chromosome 4"/>
</dbReference>
<dbReference type="InterPro" id="IPR008455">
    <property type="entry name" value="HssA/B-related"/>
</dbReference>
<dbReference type="PANTHER" id="PTHR31857">
    <property type="entry name" value="HSSA/B-LIKE PROTEIN 17-RELATED"/>
    <property type="match status" value="1"/>
</dbReference>
<dbReference type="PANTHER" id="PTHR31857:SF2">
    <property type="entry name" value="HSSA_B-LIKE PROTEIN 17-RELATED"/>
    <property type="match status" value="1"/>
</dbReference>
<dbReference type="Pfam" id="PF05710">
    <property type="entry name" value="Coiled"/>
    <property type="match status" value="1"/>
</dbReference>
<name>HSL60_DICDI</name>
<accession>Q54QP4</accession>
<comment type="similarity">
    <text evidence="2">Belongs to the hssA/B family.</text>
</comment>
<gene>
    <name type="primary">hssl60</name>
    <name type="ORF">DDB_G0283713</name>
</gene>
<reference key="1">
    <citation type="journal article" date="2005" name="Nature">
        <title>The genome of the social amoeba Dictyostelium discoideum.</title>
        <authorList>
            <person name="Eichinger L."/>
            <person name="Pachebat J.A."/>
            <person name="Gloeckner G."/>
            <person name="Rajandream M.A."/>
            <person name="Sucgang R."/>
            <person name="Berriman M."/>
            <person name="Song J."/>
            <person name="Olsen R."/>
            <person name="Szafranski K."/>
            <person name="Xu Q."/>
            <person name="Tunggal B."/>
            <person name="Kummerfeld S."/>
            <person name="Madera M."/>
            <person name="Konfortov B.A."/>
            <person name="Rivero F."/>
            <person name="Bankier A.T."/>
            <person name="Lehmann R."/>
            <person name="Hamlin N."/>
            <person name="Davies R."/>
            <person name="Gaudet P."/>
            <person name="Fey P."/>
            <person name="Pilcher K."/>
            <person name="Chen G."/>
            <person name="Saunders D."/>
            <person name="Sodergren E.J."/>
            <person name="Davis P."/>
            <person name="Kerhornou A."/>
            <person name="Nie X."/>
            <person name="Hall N."/>
            <person name="Anjard C."/>
            <person name="Hemphill L."/>
            <person name="Bason N."/>
            <person name="Farbrother P."/>
            <person name="Desany B."/>
            <person name="Just E."/>
            <person name="Morio T."/>
            <person name="Rost R."/>
            <person name="Churcher C.M."/>
            <person name="Cooper J."/>
            <person name="Haydock S."/>
            <person name="van Driessche N."/>
            <person name="Cronin A."/>
            <person name="Goodhead I."/>
            <person name="Muzny D.M."/>
            <person name="Mourier T."/>
            <person name="Pain A."/>
            <person name="Lu M."/>
            <person name="Harper D."/>
            <person name="Lindsay R."/>
            <person name="Hauser H."/>
            <person name="James K.D."/>
            <person name="Quiles M."/>
            <person name="Madan Babu M."/>
            <person name="Saito T."/>
            <person name="Buchrieser C."/>
            <person name="Wardroper A."/>
            <person name="Felder M."/>
            <person name="Thangavelu M."/>
            <person name="Johnson D."/>
            <person name="Knights A."/>
            <person name="Loulseged H."/>
            <person name="Mungall K.L."/>
            <person name="Oliver K."/>
            <person name="Price C."/>
            <person name="Quail M.A."/>
            <person name="Urushihara H."/>
            <person name="Hernandez J."/>
            <person name="Rabbinowitsch E."/>
            <person name="Steffen D."/>
            <person name="Sanders M."/>
            <person name="Ma J."/>
            <person name="Kohara Y."/>
            <person name="Sharp S."/>
            <person name="Simmonds M.N."/>
            <person name="Spiegler S."/>
            <person name="Tivey A."/>
            <person name="Sugano S."/>
            <person name="White B."/>
            <person name="Walker D."/>
            <person name="Woodward J.R."/>
            <person name="Winckler T."/>
            <person name="Tanaka Y."/>
            <person name="Shaulsky G."/>
            <person name="Schleicher M."/>
            <person name="Weinstock G.M."/>
            <person name="Rosenthal A."/>
            <person name="Cox E.C."/>
            <person name="Chisholm R.L."/>
            <person name="Gibbs R.A."/>
            <person name="Loomis W.F."/>
            <person name="Platzer M."/>
            <person name="Kay R.R."/>
            <person name="Williams J.G."/>
            <person name="Dear P.H."/>
            <person name="Noegel A.A."/>
            <person name="Barrell B.G."/>
            <person name="Kuspa A."/>
        </authorList>
    </citation>
    <scope>NUCLEOTIDE SEQUENCE [LARGE SCALE GENOMIC DNA]</scope>
    <source>
        <strain>AX4</strain>
    </source>
</reference>
<organism>
    <name type="scientific">Dictyostelium discoideum</name>
    <name type="common">Social amoeba</name>
    <dbReference type="NCBI Taxonomy" id="44689"/>
    <lineage>
        <taxon>Eukaryota</taxon>
        <taxon>Amoebozoa</taxon>
        <taxon>Evosea</taxon>
        <taxon>Eumycetozoa</taxon>
        <taxon>Dictyostelia</taxon>
        <taxon>Dictyosteliales</taxon>
        <taxon>Dictyosteliaceae</taxon>
        <taxon>Dictyostelium</taxon>
    </lineage>
</organism>